<gene>
    <name evidence="1" type="primary">ureD</name>
    <name type="ordered locus">BCE_3658</name>
</gene>
<proteinExistence type="inferred from homology"/>
<protein>
    <recommendedName>
        <fullName evidence="1">Urease accessory protein UreD</fullName>
    </recommendedName>
</protein>
<keyword id="KW-0143">Chaperone</keyword>
<keyword id="KW-0963">Cytoplasm</keyword>
<keyword id="KW-0996">Nickel insertion</keyword>
<accession>Q733K0</accession>
<feature type="chain" id="PRO_0000346551" description="Urease accessory protein UreD">
    <location>
        <begin position="1"/>
        <end position="273"/>
    </location>
</feature>
<sequence length="273" mass="31567">MKSPTGVLNIDVMEKRDKTVPIKVYHKDALKVTQPIYLDKYGRAYYYIMNSGGGYLKGDFYSININVGKDAKTYITSQSATKVYKTPNSYALQELNFYIGQNAAMEYLPDPLIMYKDAAYKQKTNIYMQNNSTLILCDSVTPGWSPNMEKFTYQYFDSLTKIYMENKLVVYDHLLLNPFKESLDQMGILNQYSHYGTFIVINENVTNDLIAALKTSFSNTNNMKIGIASTTCKGFVIRILSHNTEDMESIFFQCHRFVRENCLHEELTSYRKY</sequence>
<evidence type="ECO:0000255" key="1">
    <source>
        <dbReference type="HAMAP-Rule" id="MF_01384"/>
    </source>
</evidence>
<dbReference type="EMBL" id="AE017194">
    <property type="protein sequence ID" value="AAS42563.1"/>
    <property type="molecule type" value="Genomic_DNA"/>
</dbReference>
<dbReference type="SMR" id="Q733K0"/>
<dbReference type="KEGG" id="bca:BCE_3658"/>
<dbReference type="HOGENOM" id="CLU_056339_5_0_9"/>
<dbReference type="Proteomes" id="UP000002527">
    <property type="component" value="Chromosome"/>
</dbReference>
<dbReference type="GO" id="GO:0005737">
    <property type="term" value="C:cytoplasm"/>
    <property type="evidence" value="ECO:0007669"/>
    <property type="project" value="UniProtKB-SubCell"/>
</dbReference>
<dbReference type="GO" id="GO:0016151">
    <property type="term" value="F:nickel cation binding"/>
    <property type="evidence" value="ECO:0007669"/>
    <property type="project" value="UniProtKB-UniRule"/>
</dbReference>
<dbReference type="HAMAP" id="MF_01384">
    <property type="entry name" value="UreD"/>
    <property type="match status" value="1"/>
</dbReference>
<dbReference type="InterPro" id="IPR002669">
    <property type="entry name" value="UreD"/>
</dbReference>
<dbReference type="PANTHER" id="PTHR33643">
    <property type="entry name" value="UREASE ACCESSORY PROTEIN D"/>
    <property type="match status" value="1"/>
</dbReference>
<dbReference type="PANTHER" id="PTHR33643:SF1">
    <property type="entry name" value="UREASE ACCESSORY PROTEIN D"/>
    <property type="match status" value="1"/>
</dbReference>
<dbReference type="Pfam" id="PF01774">
    <property type="entry name" value="UreD"/>
    <property type="match status" value="1"/>
</dbReference>
<comment type="function">
    <text evidence="1">Required for maturation of urease via the functional incorporation of the urease nickel metallocenter.</text>
</comment>
<comment type="subunit">
    <text evidence="1">UreD, UreF and UreG form a complex that acts as a GTP-hydrolysis-dependent molecular chaperone, activating the urease apoprotein by helping to assemble the nickel containing metallocenter of UreC. The UreE protein probably delivers the nickel.</text>
</comment>
<comment type="subcellular location">
    <subcellularLocation>
        <location evidence="1">Cytoplasm</location>
    </subcellularLocation>
</comment>
<comment type="similarity">
    <text evidence="1">Belongs to the UreD family.</text>
</comment>
<reference key="1">
    <citation type="journal article" date="2004" name="Nucleic Acids Res.">
        <title>The genome sequence of Bacillus cereus ATCC 10987 reveals metabolic adaptations and a large plasmid related to Bacillus anthracis pXO1.</title>
        <authorList>
            <person name="Rasko D.A."/>
            <person name="Ravel J."/>
            <person name="Oekstad O.A."/>
            <person name="Helgason E."/>
            <person name="Cer R.Z."/>
            <person name="Jiang L."/>
            <person name="Shores K.A."/>
            <person name="Fouts D.E."/>
            <person name="Tourasse N.J."/>
            <person name="Angiuoli S.V."/>
            <person name="Kolonay J.F."/>
            <person name="Nelson W.C."/>
            <person name="Kolstoe A.-B."/>
            <person name="Fraser C.M."/>
            <person name="Read T.D."/>
        </authorList>
    </citation>
    <scope>NUCLEOTIDE SEQUENCE [LARGE SCALE GENOMIC DNA]</scope>
    <source>
        <strain>ATCC 10987 / NRS 248</strain>
    </source>
</reference>
<name>URED_BACC1</name>
<organism>
    <name type="scientific">Bacillus cereus (strain ATCC 10987 / NRS 248)</name>
    <dbReference type="NCBI Taxonomy" id="222523"/>
    <lineage>
        <taxon>Bacteria</taxon>
        <taxon>Bacillati</taxon>
        <taxon>Bacillota</taxon>
        <taxon>Bacilli</taxon>
        <taxon>Bacillales</taxon>
        <taxon>Bacillaceae</taxon>
        <taxon>Bacillus</taxon>
        <taxon>Bacillus cereus group</taxon>
    </lineage>
</organism>